<reference key="1">
    <citation type="journal article" date="2008" name="BMC Genomics">
        <title>The genome of Aeromonas salmonicida subsp. salmonicida A449: insights into the evolution of a fish pathogen.</title>
        <authorList>
            <person name="Reith M.E."/>
            <person name="Singh R.K."/>
            <person name="Curtis B."/>
            <person name="Boyd J.M."/>
            <person name="Bouevitch A."/>
            <person name="Kimball J."/>
            <person name="Munholland J."/>
            <person name="Murphy C."/>
            <person name="Sarty D."/>
            <person name="Williams J."/>
            <person name="Nash J.H."/>
            <person name="Johnson S.C."/>
            <person name="Brown L.L."/>
        </authorList>
    </citation>
    <scope>NUCLEOTIDE SEQUENCE [LARGE SCALE GENOMIC DNA]</scope>
    <source>
        <strain>A449</strain>
    </source>
</reference>
<evidence type="ECO:0000255" key="1">
    <source>
        <dbReference type="HAMAP-Rule" id="MF_00031"/>
    </source>
</evidence>
<gene>
    <name evidence="1" type="primary">ruvA</name>
    <name type="ordered locus">ASA_0735</name>
</gene>
<feature type="chain" id="PRO_1000002388" description="Holliday junction branch migration complex subunit RuvA">
    <location>
        <begin position="1"/>
        <end position="204"/>
    </location>
</feature>
<feature type="region of interest" description="Domain I" evidence="1">
    <location>
        <begin position="1"/>
        <end position="64"/>
    </location>
</feature>
<feature type="region of interest" description="Domain II" evidence="1">
    <location>
        <begin position="65"/>
        <end position="143"/>
    </location>
</feature>
<feature type="region of interest" description="Flexible linker" evidence="1">
    <location>
        <begin position="144"/>
        <end position="155"/>
    </location>
</feature>
<feature type="region of interest" description="Domain III" evidence="1">
    <location>
        <begin position="156"/>
        <end position="204"/>
    </location>
</feature>
<keyword id="KW-0963">Cytoplasm</keyword>
<keyword id="KW-0227">DNA damage</keyword>
<keyword id="KW-0233">DNA recombination</keyword>
<keyword id="KW-0234">DNA repair</keyword>
<keyword id="KW-0238">DNA-binding</keyword>
<proteinExistence type="inferred from homology"/>
<dbReference type="EMBL" id="CP000644">
    <property type="protein sequence ID" value="ABO88897.1"/>
    <property type="molecule type" value="Genomic_DNA"/>
</dbReference>
<dbReference type="RefSeq" id="WP_005313314.1">
    <property type="nucleotide sequence ID" value="NC_009348.1"/>
</dbReference>
<dbReference type="SMR" id="A4SJ25"/>
<dbReference type="STRING" id="29491.GCA_000820065_01754"/>
<dbReference type="GeneID" id="79878279"/>
<dbReference type="KEGG" id="asa:ASA_0735"/>
<dbReference type="eggNOG" id="COG0632">
    <property type="taxonomic scope" value="Bacteria"/>
</dbReference>
<dbReference type="HOGENOM" id="CLU_087936_0_0_6"/>
<dbReference type="Proteomes" id="UP000000225">
    <property type="component" value="Chromosome"/>
</dbReference>
<dbReference type="GO" id="GO:0005737">
    <property type="term" value="C:cytoplasm"/>
    <property type="evidence" value="ECO:0007669"/>
    <property type="project" value="UniProtKB-SubCell"/>
</dbReference>
<dbReference type="GO" id="GO:0009379">
    <property type="term" value="C:Holliday junction helicase complex"/>
    <property type="evidence" value="ECO:0007669"/>
    <property type="project" value="InterPro"/>
</dbReference>
<dbReference type="GO" id="GO:0048476">
    <property type="term" value="C:Holliday junction resolvase complex"/>
    <property type="evidence" value="ECO:0007669"/>
    <property type="project" value="UniProtKB-UniRule"/>
</dbReference>
<dbReference type="GO" id="GO:0005524">
    <property type="term" value="F:ATP binding"/>
    <property type="evidence" value="ECO:0007669"/>
    <property type="project" value="InterPro"/>
</dbReference>
<dbReference type="GO" id="GO:0000400">
    <property type="term" value="F:four-way junction DNA binding"/>
    <property type="evidence" value="ECO:0007669"/>
    <property type="project" value="UniProtKB-UniRule"/>
</dbReference>
<dbReference type="GO" id="GO:0009378">
    <property type="term" value="F:four-way junction helicase activity"/>
    <property type="evidence" value="ECO:0007669"/>
    <property type="project" value="InterPro"/>
</dbReference>
<dbReference type="GO" id="GO:0006310">
    <property type="term" value="P:DNA recombination"/>
    <property type="evidence" value="ECO:0007669"/>
    <property type="project" value="UniProtKB-UniRule"/>
</dbReference>
<dbReference type="GO" id="GO:0006281">
    <property type="term" value="P:DNA repair"/>
    <property type="evidence" value="ECO:0007669"/>
    <property type="project" value="UniProtKB-UniRule"/>
</dbReference>
<dbReference type="CDD" id="cd14332">
    <property type="entry name" value="UBA_RuvA_C"/>
    <property type="match status" value="1"/>
</dbReference>
<dbReference type="FunFam" id="1.10.150.20:FF:000012">
    <property type="entry name" value="Holliday junction ATP-dependent DNA helicase RuvA"/>
    <property type="match status" value="1"/>
</dbReference>
<dbReference type="FunFam" id="2.40.50.140:FF:000083">
    <property type="entry name" value="Holliday junction ATP-dependent DNA helicase RuvA"/>
    <property type="match status" value="1"/>
</dbReference>
<dbReference type="Gene3D" id="1.10.150.20">
    <property type="entry name" value="5' to 3' exonuclease, C-terminal subdomain"/>
    <property type="match status" value="1"/>
</dbReference>
<dbReference type="Gene3D" id="1.10.8.10">
    <property type="entry name" value="DNA helicase RuvA subunit, C-terminal domain"/>
    <property type="match status" value="1"/>
</dbReference>
<dbReference type="Gene3D" id="2.40.50.140">
    <property type="entry name" value="Nucleic acid-binding proteins"/>
    <property type="match status" value="1"/>
</dbReference>
<dbReference type="HAMAP" id="MF_00031">
    <property type="entry name" value="DNA_HJ_migration_RuvA"/>
    <property type="match status" value="1"/>
</dbReference>
<dbReference type="InterPro" id="IPR013849">
    <property type="entry name" value="DNA_helicase_Holl-junc_RuvA_I"/>
</dbReference>
<dbReference type="InterPro" id="IPR003583">
    <property type="entry name" value="Hlx-hairpin-Hlx_DNA-bd_motif"/>
</dbReference>
<dbReference type="InterPro" id="IPR012340">
    <property type="entry name" value="NA-bd_OB-fold"/>
</dbReference>
<dbReference type="InterPro" id="IPR000085">
    <property type="entry name" value="RuvA"/>
</dbReference>
<dbReference type="InterPro" id="IPR010994">
    <property type="entry name" value="RuvA_2-like"/>
</dbReference>
<dbReference type="InterPro" id="IPR011114">
    <property type="entry name" value="RuvA_C"/>
</dbReference>
<dbReference type="InterPro" id="IPR036267">
    <property type="entry name" value="RuvA_C_sf"/>
</dbReference>
<dbReference type="NCBIfam" id="TIGR00084">
    <property type="entry name" value="ruvA"/>
    <property type="match status" value="1"/>
</dbReference>
<dbReference type="Pfam" id="PF14520">
    <property type="entry name" value="HHH_5"/>
    <property type="match status" value="1"/>
</dbReference>
<dbReference type="Pfam" id="PF07499">
    <property type="entry name" value="RuvA_C"/>
    <property type="match status" value="1"/>
</dbReference>
<dbReference type="Pfam" id="PF01330">
    <property type="entry name" value="RuvA_N"/>
    <property type="match status" value="1"/>
</dbReference>
<dbReference type="SMART" id="SM00278">
    <property type="entry name" value="HhH1"/>
    <property type="match status" value="2"/>
</dbReference>
<dbReference type="SUPFAM" id="SSF46929">
    <property type="entry name" value="DNA helicase RuvA subunit, C-terminal domain"/>
    <property type="match status" value="1"/>
</dbReference>
<dbReference type="SUPFAM" id="SSF50249">
    <property type="entry name" value="Nucleic acid-binding proteins"/>
    <property type="match status" value="1"/>
</dbReference>
<dbReference type="SUPFAM" id="SSF47781">
    <property type="entry name" value="RuvA domain 2-like"/>
    <property type="match status" value="1"/>
</dbReference>
<name>RUVA_AERS4</name>
<accession>A4SJ25</accession>
<protein>
    <recommendedName>
        <fullName evidence="1">Holliday junction branch migration complex subunit RuvA</fullName>
    </recommendedName>
</protein>
<sequence>MIGRLRGVVIEKQPPEVLLEVGGLGYEVQMPMSCFYDLPEIGKEVTIHTHFVVREDAQLLYGFNHKQERALFRELIKTNGVGPKLALAILSGMTATQFVLSVEREEISSLIKLPGVGKKTAERLVVEMKDRLKGWVSHDLFSPAEISLPARESVLRAPDSSEEAASALVALGYKPQQASQIVSKIAKEGMSVEDIIRESLRSLV</sequence>
<organism>
    <name type="scientific">Aeromonas salmonicida (strain A449)</name>
    <dbReference type="NCBI Taxonomy" id="382245"/>
    <lineage>
        <taxon>Bacteria</taxon>
        <taxon>Pseudomonadati</taxon>
        <taxon>Pseudomonadota</taxon>
        <taxon>Gammaproteobacteria</taxon>
        <taxon>Aeromonadales</taxon>
        <taxon>Aeromonadaceae</taxon>
        <taxon>Aeromonas</taxon>
    </lineage>
</organism>
<comment type="function">
    <text evidence="1">The RuvA-RuvB-RuvC complex processes Holliday junction (HJ) DNA during genetic recombination and DNA repair, while the RuvA-RuvB complex plays an important role in the rescue of blocked DNA replication forks via replication fork reversal (RFR). RuvA specifically binds to HJ cruciform DNA, conferring on it an open structure. The RuvB hexamer acts as an ATP-dependent pump, pulling dsDNA into and through the RuvAB complex. HJ branch migration allows RuvC to scan DNA until it finds its consensus sequence, where it cleaves and resolves the cruciform DNA.</text>
</comment>
<comment type="subunit">
    <text evidence="1">Homotetramer. Forms an RuvA(8)-RuvB(12)-Holliday junction (HJ) complex. HJ DNA is sandwiched between 2 RuvA tetramers; dsDNA enters through RuvA and exits via RuvB. An RuvB hexamer assembles on each DNA strand where it exits the tetramer. Each RuvB hexamer is contacted by two RuvA subunits (via domain III) on 2 adjacent RuvB subunits; this complex drives branch migration. In the full resolvosome a probable DNA-RuvA(4)-RuvB(12)-RuvC(2) complex forms which resolves the HJ.</text>
</comment>
<comment type="subcellular location">
    <subcellularLocation>
        <location evidence="1">Cytoplasm</location>
    </subcellularLocation>
</comment>
<comment type="domain">
    <text evidence="1">Has three domains with a flexible linker between the domains II and III and assumes an 'L' shape. Domain III is highly mobile and contacts RuvB.</text>
</comment>
<comment type="similarity">
    <text evidence="1">Belongs to the RuvA family.</text>
</comment>